<name>PNPH_ANOGA</name>
<keyword id="KW-0002">3D-structure</keyword>
<keyword id="KW-0025">Alternative splicing</keyword>
<keyword id="KW-0328">Glycosyltransferase</keyword>
<keyword id="KW-0660">Purine salvage</keyword>
<keyword id="KW-1185">Reference proteome</keyword>
<keyword id="KW-0808">Transferase</keyword>
<sequence length="353" mass="38754">MSKFSYLQNGKASTNGVPHANGHHQQHQNGHSNGVARNGGTATDTLPVAYQQKAATSGPFHMPRTEHVGYTYDTLQEIATYLLERTELRPKVGIICGSGLGTLAEQLTDVDSFDYETIPHFPVSTVAGHVGRLVFGYLAGVPVMCMQGRFHHYEGYPLAKCAMPVRVMHLIGCTHLIATNAAGGANPKYRVGDIMLIKDHINLMGFAGNNPLQGPNDERFGPRFFGMANTYDPKLNQQAKVIARQIGIENELREGVYTCLGGPNFETVAEVKMLSMLGVDAIGMSTVHEIITARHCGMTCFAFSLITNMCTMSYEEEEEHCHDSIVGVGKNREKTLGEFVSRIVKHIHYEAKK</sequence>
<comment type="function">
    <text evidence="2">As part of the purine salvage pathway, catalyzes the phosphorolytic breakdown of the N-glycosidic bond in the beta-(deoxy)ribonucleoside molecules, with the formation of the corresponding free purine bases and pentose-1-phosphate (PubMed:17918964). Preferentially acts on 2'-deoxyinosine and inosine, and to a lesser extent on 2'-deoxyguanosine and guanosine (PubMed:17918964). Has no activity towards adenosine or 2'-deoxyadenosine (PubMed:17918964).</text>
</comment>
<comment type="catalytic activity">
    <reaction evidence="2">
        <text>inosine + phosphate = alpha-D-ribose 1-phosphate + hypoxanthine</text>
        <dbReference type="Rhea" id="RHEA:27646"/>
        <dbReference type="ChEBI" id="CHEBI:17368"/>
        <dbReference type="ChEBI" id="CHEBI:17596"/>
        <dbReference type="ChEBI" id="CHEBI:43474"/>
        <dbReference type="ChEBI" id="CHEBI:57720"/>
        <dbReference type="EC" id="2.4.2.1"/>
    </reaction>
</comment>
<comment type="catalytic activity">
    <reaction evidence="2">
        <text>guanosine + phosphate = alpha-D-ribose 1-phosphate + guanine</text>
        <dbReference type="Rhea" id="RHEA:13233"/>
        <dbReference type="ChEBI" id="CHEBI:16235"/>
        <dbReference type="ChEBI" id="CHEBI:16750"/>
        <dbReference type="ChEBI" id="CHEBI:43474"/>
        <dbReference type="ChEBI" id="CHEBI:57720"/>
        <dbReference type="EC" id="2.4.2.1"/>
    </reaction>
</comment>
<comment type="catalytic activity">
    <reaction evidence="2">
        <text>2'-deoxyguanosine + phosphate = 2-deoxy-alpha-D-ribose 1-phosphate + guanine</text>
        <dbReference type="Rhea" id="RHEA:27738"/>
        <dbReference type="ChEBI" id="CHEBI:16235"/>
        <dbReference type="ChEBI" id="CHEBI:17172"/>
        <dbReference type="ChEBI" id="CHEBI:43474"/>
        <dbReference type="ChEBI" id="CHEBI:57259"/>
        <dbReference type="EC" id="2.4.2.1"/>
    </reaction>
</comment>
<comment type="catalytic activity">
    <reaction evidence="2">
        <text>2'-deoxyinosine + phosphate = 2-deoxy-alpha-D-ribose 1-phosphate + hypoxanthine</text>
        <dbReference type="Rhea" id="RHEA:27750"/>
        <dbReference type="ChEBI" id="CHEBI:17368"/>
        <dbReference type="ChEBI" id="CHEBI:28997"/>
        <dbReference type="ChEBI" id="CHEBI:43474"/>
        <dbReference type="ChEBI" id="CHEBI:57259"/>
        <dbReference type="EC" id="2.4.2.1"/>
    </reaction>
</comment>
<comment type="activity regulation">
    <text evidence="2">Inhibited by 5'-deaza-1'-aza-2c-deoxy-1'-(9-methylene) immucillin-H (DADMe-ImmH).</text>
</comment>
<comment type="biophysicochemical properties">
    <kinetics>
        <KM evidence="2">585 uM for inosine (at 25 degrees Celsius and pH 7.4)</KM>
        <KM evidence="2">187 uM for guanosine (at 25 degrees Celsius and pH 7.4)</KM>
        <KM evidence="2">190 uM for 2-deoxyinosine (at 25 degrees Celsius and pH 7.4)</KM>
        <KM evidence="2">50 uM for 2-deoxyguanosine (at 25 degrees Celsius and pH 7.4)</KM>
        <text evidence="2">kcat is 41 sec(-1) with inosine as substrate (PubMed:17918964). kcat is 1 sec(-1) with guanosine as substrate (PubMed:17918964). kcat is 54 sec(-1) with 2-deoxyinosine as substrate (PubMed:17918964). kcat is 5.4 sec(-1) with 2-deoxyguanosine as substrate (PubMed:17918964).</text>
    </kinetics>
</comment>
<comment type="pathway">
    <text evidence="2">Purine metabolism; purine nucleoside salvage.</text>
</comment>
<comment type="subunit">
    <text evidence="5">Homotrimer.</text>
</comment>
<comment type="alternative products">
    <event type="alternative splicing"/>
    <isoform>
        <id>A4Q998-1</id>
        <name evidence="3">1</name>
        <sequence type="displayed"/>
    </isoform>
    <isoform>
        <id>A4Q998-2</id>
        <name evidence="3">2</name>
        <sequence type="described" ref="VSP_060865"/>
    </isoform>
</comment>
<comment type="similarity">
    <text evidence="4">Belongs to the PNP/MTAP phosphorylase family.</text>
</comment>
<accession>A4Q998</accession>
<accession>A7UTZ1</accession>
<evidence type="ECO:0000256" key="1">
    <source>
        <dbReference type="SAM" id="MobiDB-lite"/>
    </source>
</evidence>
<evidence type="ECO:0000269" key="2">
    <source>
    </source>
</evidence>
<evidence type="ECO:0000303" key="3">
    <source>
    </source>
</evidence>
<evidence type="ECO:0000305" key="4"/>
<evidence type="ECO:0000305" key="5">
    <source>
    </source>
</evidence>
<evidence type="ECO:0000312" key="6">
    <source>
        <dbReference type="EMBL" id="CAM84316.1"/>
    </source>
</evidence>
<evidence type="ECO:0000312" key="7">
    <source>
        <dbReference type="EMBL" id="EDO63766.1"/>
    </source>
</evidence>
<evidence type="ECO:0000312" key="8">
    <source>
        <dbReference type="Proteomes" id="UP000007062"/>
    </source>
</evidence>
<evidence type="ECO:0007744" key="9">
    <source>
        <dbReference type="PDB" id="2P4S"/>
    </source>
</evidence>
<evidence type="ECO:0007829" key="10">
    <source>
        <dbReference type="PDB" id="2P4S"/>
    </source>
</evidence>
<gene>
    <name evidence="3" type="primary">pnp</name>
    <name evidence="7" type="ORF">AgaP_AGAP005945</name>
</gene>
<dbReference type="EC" id="2.4.2.1" evidence="2"/>
<dbReference type="EMBL" id="AM690372">
    <property type="protein sequence ID" value="CAM84316.1"/>
    <property type="molecule type" value="Genomic_DNA"/>
</dbReference>
<dbReference type="EMBL" id="AAAB01008960">
    <property type="protein sequence ID" value="EDO63766.1"/>
    <property type="molecule type" value="Genomic_DNA"/>
</dbReference>
<dbReference type="RefSeq" id="XP_001688760.1">
    <molecule id="A4Q998-1"/>
    <property type="nucleotide sequence ID" value="XM_001688708.1"/>
</dbReference>
<dbReference type="PDB" id="2P4S">
    <property type="method" value="X-ray"/>
    <property type="resolution" value="2.20 A"/>
    <property type="chains" value="A/B/C=1-353"/>
</dbReference>
<dbReference type="PDBsum" id="2P4S"/>
<dbReference type="SMR" id="A4Q998"/>
<dbReference type="FunCoup" id="A4Q998">
    <property type="interactions" value="265"/>
</dbReference>
<dbReference type="STRING" id="7165.A4Q998"/>
<dbReference type="PaxDb" id="7165-AGAP005945-PA"/>
<dbReference type="EnsemblMetazoa" id="AGAP005945-RA">
    <molecule id="A4Q998-1"/>
    <property type="protein sequence ID" value="AGAP005945-PA"/>
    <property type="gene ID" value="AGAP005945"/>
</dbReference>
<dbReference type="GeneID" id="1276614"/>
<dbReference type="KEGG" id="aga:1276614"/>
<dbReference type="VEuPathDB" id="VectorBase:AGAMI1_009119"/>
<dbReference type="VEuPathDB" id="VectorBase:AGAP005945"/>
<dbReference type="eggNOG" id="KOG3984">
    <property type="taxonomic scope" value="Eukaryota"/>
</dbReference>
<dbReference type="HOGENOM" id="CLU_054456_1_2_1"/>
<dbReference type="InParanoid" id="A4Q998"/>
<dbReference type="PhylomeDB" id="A4Q998"/>
<dbReference type="BRENDA" id="2.4.2.1">
    <property type="organism ID" value="358"/>
</dbReference>
<dbReference type="UniPathway" id="UPA00606"/>
<dbReference type="EvolutionaryTrace" id="A4Q998"/>
<dbReference type="Proteomes" id="UP000007062">
    <property type="component" value="Chromosome 2L"/>
</dbReference>
<dbReference type="ExpressionAtlas" id="A4Q998">
    <property type="expression patterns" value="differential"/>
</dbReference>
<dbReference type="GO" id="GO:0005737">
    <property type="term" value="C:cytoplasm"/>
    <property type="evidence" value="ECO:0000318"/>
    <property type="project" value="GO_Central"/>
</dbReference>
<dbReference type="GO" id="GO:0004731">
    <property type="term" value="F:purine-nucleoside phosphorylase activity"/>
    <property type="evidence" value="ECO:0000318"/>
    <property type="project" value="GO_Central"/>
</dbReference>
<dbReference type="GO" id="GO:0006166">
    <property type="term" value="P:purine ribonucleoside salvage"/>
    <property type="evidence" value="ECO:0007669"/>
    <property type="project" value="UniProtKB-KW"/>
</dbReference>
<dbReference type="CDD" id="cd09009">
    <property type="entry name" value="PNP-EcPNPII_like"/>
    <property type="match status" value="1"/>
</dbReference>
<dbReference type="FunFam" id="3.40.50.1580:FF:000004">
    <property type="entry name" value="Purine nucleoside phosphorylase"/>
    <property type="match status" value="1"/>
</dbReference>
<dbReference type="Gene3D" id="3.40.50.1580">
    <property type="entry name" value="Nucleoside phosphorylase domain"/>
    <property type="match status" value="1"/>
</dbReference>
<dbReference type="InterPro" id="IPR000845">
    <property type="entry name" value="Nucleoside_phosphorylase_d"/>
</dbReference>
<dbReference type="InterPro" id="IPR035994">
    <property type="entry name" value="Nucleoside_phosphorylase_sf"/>
</dbReference>
<dbReference type="InterPro" id="IPR011270">
    <property type="entry name" value="Pur_Nuc_Pase_Ino/Guo-sp"/>
</dbReference>
<dbReference type="InterPro" id="IPR011268">
    <property type="entry name" value="Purine_phosphorylase"/>
</dbReference>
<dbReference type="NCBIfam" id="TIGR01700">
    <property type="entry name" value="PNPH"/>
    <property type="match status" value="1"/>
</dbReference>
<dbReference type="NCBIfam" id="TIGR01697">
    <property type="entry name" value="PNPH-PUNA-XAPA"/>
    <property type="match status" value="1"/>
</dbReference>
<dbReference type="NCBIfam" id="NF006054">
    <property type="entry name" value="PRK08202.1"/>
    <property type="match status" value="1"/>
</dbReference>
<dbReference type="PANTHER" id="PTHR11904">
    <property type="entry name" value="METHYLTHIOADENOSINE/PURINE NUCLEOSIDE PHOSPHORYLASE"/>
    <property type="match status" value="1"/>
</dbReference>
<dbReference type="PANTHER" id="PTHR11904:SF9">
    <property type="entry name" value="PURINE NUCLEOSIDE PHOSPHORYLASE-RELATED"/>
    <property type="match status" value="1"/>
</dbReference>
<dbReference type="Pfam" id="PF01048">
    <property type="entry name" value="PNP_UDP_1"/>
    <property type="match status" value="1"/>
</dbReference>
<dbReference type="SUPFAM" id="SSF53167">
    <property type="entry name" value="Purine and uridine phosphorylases"/>
    <property type="match status" value="1"/>
</dbReference>
<reference evidence="6 9" key="1">
    <citation type="journal article" date="2007" name="Biochemistry">
        <title>Anopheles gambiae purine nucleoside phosphorylase: catalysis, structure, and inhibition.</title>
        <authorList>
            <person name="Taylor E.A."/>
            <person name="Rinaldo-Matthis A."/>
            <person name="Li L."/>
            <person name="Ghanem M."/>
            <person name="Hazleton K.Z."/>
            <person name="Cassera M.B."/>
            <person name="Almo S.C."/>
            <person name="Schramm V.L."/>
        </authorList>
    </citation>
    <scope>NUCLEOTIDE SEQUENCE [GENOMIC DNA]</scope>
    <scope>IDENTIFICATION OF ISOFORM 2</scope>
    <scope>X-RAY CRYSTALLOGRAPHY (2.20 ANGSTROMS) IN COMPLEX WITH PHOSPHATE AND INHIBITOR DADME-IMMH</scope>
    <scope>FUNCTION</scope>
    <scope>CATALYTIC ACTIVITY</scope>
    <scope>ACTIVITY REGULATION</scope>
    <scope>BIOPHYSICOCHEMICAL PROPERTIES</scope>
    <scope>PATHWAY</scope>
    <scope>SUBUNIT</scope>
</reference>
<reference evidence="8" key="2">
    <citation type="journal article" date="2002" name="Science">
        <title>The genome sequence of the malaria mosquito Anopheles gambiae.</title>
        <authorList>
            <person name="Holt R.A."/>
            <person name="Subramanian G.M."/>
            <person name="Halpern A."/>
            <person name="Sutton G.G."/>
            <person name="Charlab R."/>
            <person name="Nusskern D.R."/>
            <person name="Wincker P."/>
            <person name="Clark A.G."/>
            <person name="Ribeiro J.M.C."/>
            <person name="Wides R."/>
            <person name="Salzberg S.L."/>
            <person name="Loftus B.J."/>
            <person name="Yandell M.D."/>
            <person name="Majoros W.H."/>
            <person name="Rusch D.B."/>
            <person name="Lai Z."/>
            <person name="Kraft C.L."/>
            <person name="Abril J.F."/>
            <person name="Anthouard V."/>
            <person name="Arensburger P."/>
            <person name="Atkinson P.W."/>
            <person name="Baden H."/>
            <person name="de Berardinis V."/>
            <person name="Baldwin D."/>
            <person name="Benes V."/>
            <person name="Biedler J."/>
            <person name="Blass C."/>
            <person name="Bolanos R."/>
            <person name="Boscus D."/>
            <person name="Barnstead M."/>
            <person name="Cai S."/>
            <person name="Center A."/>
            <person name="Chaturverdi K."/>
            <person name="Christophides G.K."/>
            <person name="Chrystal M.A.M."/>
            <person name="Clamp M."/>
            <person name="Cravchik A."/>
            <person name="Curwen V."/>
            <person name="Dana A."/>
            <person name="Delcher A."/>
            <person name="Dew I."/>
            <person name="Evans C.A."/>
            <person name="Flanigan M."/>
            <person name="Grundschober-Freimoser A."/>
            <person name="Friedli L."/>
            <person name="Gu Z."/>
            <person name="Guan P."/>
            <person name="Guigo R."/>
            <person name="Hillenmeyer M.E."/>
            <person name="Hladun S.L."/>
            <person name="Hogan J.R."/>
            <person name="Hong Y.S."/>
            <person name="Hoover J."/>
            <person name="Jaillon O."/>
            <person name="Ke Z."/>
            <person name="Kodira C.D."/>
            <person name="Kokoza E."/>
            <person name="Koutsos A."/>
            <person name="Letunic I."/>
            <person name="Levitsky A.A."/>
            <person name="Liang Y."/>
            <person name="Lin J.-J."/>
            <person name="Lobo N.F."/>
            <person name="Lopez J.R."/>
            <person name="Malek J.A."/>
            <person name="McIntosh T.C."/>
            <person name="Meister S."/>
            <person name="Miller J.R."/>
            <person name="Mobarry C."/>
            <person name="Mongin E."/>
            <person name="Murphy S.D."/>
            <person name="O'Brochta D.A."/>
            <person name="Pfannkoch C."/>
            <person name="Qi R."/>
            <person name="Regier M.A."/>
            <person name="Remington K."/>
            <person name="Shao H."/>
            <person name="Sharakhova M.V."/>
            <person name="Sitter C.D."/>
            <person name="Shetty J."/>
            <person name="Smith T.J."/>
            <person name="Strong R."/>
            <person name="Sun J."/>
            <person name="Thomasova D."/>
            <person name="Ton L.Q."/>
            <person name="Topalis P."/>
            <person name="Tu Z.J."/>
            <person name="Unger M.F."/>
            <person name="Walenz B."/>
            <person name="Wang A.H."/>
            <person name="Wang J."/>
            <person name="Wang M."/>
            <person name="Wang X."/>
            <person name="Woodford K.J."/>
            <person name="Wortman J.R."/>
            <person name="Wu M."/>
            <person name="Yao A."/>
            <person name="Zdobnov E.M."/>
            <person name="Zhang H."/>
            <person name="Zhao Q."/>
            <person name="Zhao S."/>
            <person name="Zhu S.C."/>
            <person name="Zhimulev I."/>
            <person name="Coluzzi M."/>
            <person name="della Torre A."/>
            <person name="Roth C.W."/>
            <person name="Louis C."/>
            <person name="Kalush F."/>
            <person name="Mural R.J."/>
            <person name="Myers E.W."/>
            <person name="Adams M.D."/>
            <person name="Smith H.O."/>
            <person name="Broder S."/>
            <person name="Gardner M.J."/>
            <person name="Fraser C.M."/>
            <person name="Birney E."/>
            <person name="Bork P."/>
            <person name="Brey P.T."/>
            <person name="Venter J.C."/>
            <person name="Weissenbach J."/>
            <person name="Kafatos F.C."/>
            <person name="Collins F.H."/>
            <person name="Hoffman S.L."/>
        </authorList>
    </citation>
    <scope>NUCLEOTIDE SEQUENCE [LARGE SCALE GENOMIC DNA]</scope>
    <source>
        <strain evidence="8">PEST</strain>
    </source>
</reference>
<feature type="chain" id="PRO_0000451765" description="Purine nucleoside phosphorylase">
    <location>
        <begin position="1"/>
        <end position="353"/>
    </location>
</feature>
<feature type="region of interest" description="Disordered" evidence="1">
    <location>
        <begin position="1"/>
        <end position="42"/>
    </location>
</feature>
<feature type="compositionally biased region" description="Polar residues" evidence="1">
    <location>
        <begin position="1"/>
        <end position="16"/>
    </location>
</feature>
<feature type="binding site" evidence="2 9">
    <location>
        <position position="98"/>
    </location>
    <ligand>
        <name>phosphate</name>
        <dbReference type="ChEBI" id="CHEBI:43474"/>
    </ligand>
</feature>
<feature type="binding site" evidence="2 9">
    <location>
        <position position="129"/>
    </location>
    <ligand>
        <name>phosphate</name>
        <dbReference type="ChEBI" id="CHEBI:43474"/>
    </ligand>
</feature>
<feature type="binding site" evidence="2 9">
    <location>
        <begin position="149"/>
        <end position="151"/>
    </location>
    <ligand>
        <name>phosphate</name>
        <dbReference type="ChEBI" id="CHEBI:43474"/>
    </ligand>
</feature>
<feature type="binding site" evidence="2 9">
    <location>
        <position position="181"/>
    </location>
    <ligand>
        <name>phosphate</name>
        <dbReference type="ChEBI" id="CHEBI:43474"/>
    </ligand>
</feature>
<feature type="binding site" evidence="5 9">
    <location>
        <position position="266"/>
    </location>
    <ligand>
        <name>a purine D-ribonucleoside</name>
        <dbReference type="ChEBI" id="CHEBI:142355"/>
    </ligand>
</feature>
<feature type="binding site" evidence="2 9">
    <location>
        <position position="285"/>
    </location>
    <ligand>
        <name>phosphate</name>
        <dbReference type="ChEBI" id="CHEBI:43474"/>
    </ligand>
</feature>
<feature type="binding site" evidence="5 9">
    <location>
        <position position="308"/>
    </location>
    <ligand>
        <name>a purine D-ribonucleoside</name>
        <dbReference type="ChEBI" id="CHEBI:142355"/>
    </ligand>
</feature>
<feature type="splice variant" id="VSP_060865" description="In isoform 2." evidence="2">
    <original>MSKFSYLQNGKASTNGVPHANGHHQQHQNGHSNGVARNGGTATDTLPVAYQQKAATSGPFHMPRTEHV</original>
    <variation>M</variation>
    <location>
        <begin position="1"/>
        <end position="68"/>
    </location>
</feature>
<feature type="helix" evidence="10">
    <location>
        <begin position="72"/>
        <end position="85"/>
    </location>
</feature>
<feature type="strand" evidence="10">
    <location>
        <begin position="91"/>
        <end position="96"/>
    </location>
</feature>
<feature type="helix" evidence="10">
    <location>
        <begin position="102"/>
        <end position="105"/>
    </location>
</feature>
<feature type="strand" evidence="10">
    <location>
        <begin position="108"/>
        <end position="114"/>
    </location>
</feature>
<feature type="helix" evidence="10">
    <location>
        <begin position="115"/>
        <end position="117"/>
    </location>
</feature>
<feature type="strand" evidence="10">
    <location>
        <begin position="132"/>
        <end position="138"/>
    </location>
</feature>
<feature type="strand" evidence="10">
    <location>
        <begin position="141"/>
        <end position="148"/>
    </location>
</feature>
<feature type="helix" evidence="10">
    <location>
        <begin position="152"/>
        <end position="154"/>
    </location>
</feature>
<feature type="helix" evidence="10">
    <location>
        <begin position="158"/>
        <end position="171"/>
    </location>
</feature>
<feature type="strand" evidence="10">
    <location>
        <begin position="175"/>
        <end position="184"/>
    </location>
</feature>
<feature type="strand" evidence="10">
    <location>
        <begin position="194"/>
        <end position="201"/>
    </location>
</feature>
<feature type="helix" evidence="10">
    <location>
        <begin position="203"/>
        <end position="206"/>
    </location>
</feature>
<feature type="turn" evidence="10">
    <location>
        <begin position="218"/>
        <end position="220"/>
    </location>
</feature>
<feature type="helix" evidence="10">
    <location>
        <begin position="233"/>
        <end position="245"/>
    </location>
</feature>
<feature type="helix" evidence="10">
    <location>
        <begin position="249"/>
        <end position="251"/>
    </location>
</feature>
<feature type="strand" evidence="10">
    <location>
        <begin position="252"/>
        <end position="259"/>
    </location>
</feature>
<feature type="helix" evidence="10">
    <location>
        <begin position="268"/>
        <end position="276"/>
    </location>
</feature>
<feature type="strand" evidence="10">
    <location>
        <begin position="281"/>
        <end position="286"/>
    </location>
</feature>
<feature type="helix" evidence="10">
    <location>
        <begin position="287"/>
        <end position="295"/>
    </location>
</feature>
<feature type="strand" evidence="10">
    <location>
        <begin position="299"/>
        <end position="309"/>
    </location>
</feature>
<feature type="helix" evidence="10">
    <location>
        <begin position="322"/>
        <end position="330"/>
    </location>
</feature>
<feature type="helix" evidence="10">
    <location>
        <begin position="333"/>
        <end position="350"/>
    </location>
</feature>
<proteinExistence type="evidence at protein level"/>
<protein>
    <recommendedName>
        <fullName evidence="3">Purine nucleoside phosphorylase</fullName>
        <ecNumber evidence="2">2.4.2.1</ecNumber>
    </recommendedName>
    <alternativeName>
        <fullName evidence="3">AgPNP</fullName>
    </alternativeName>
    <alternativeName>
        <fullName evidence="4">Inosine phosphorylase</fullName>
    </alternativeName>
    <alternativeName>
        <fullName evidence="4">Inosine-guanosine phosphorylase</fullName>
    </alternativeName>
</protein>
<organism evidence="6">
    <name type="scientific">Anopheles gambiae</name>
    <name type="common">African malaria mosquito</name>
    <dbReference type="NCBI Taxonomy" id="7165"/>
    <lineage>
        <taxon>Eukaryota</taxon>
        <taxon>Metazoa</taxon>
        <taxon>Ecdysozoa</taxon>
        <taxon>Arthropoda</taxon>
        <taxon>Hexapoda</taxon>
        <taxon>Insecta</taxon>
        <taxon>Pterygota</taxon>
        <taxon>Neoptera</taxon>
        <taxon>Endopterygota</taxon>
        <taxon>Diptera</taxon>
        <taxon>Nematocera</taxon>
        <taxon>Culicoidea</taxon>
        <taxon>Culicidae</taxon>
        <taxon>Anophelinae</taxon>
        <taxon>Anopheles</taxon>
    </lineage>
</organism>